<protein>
    <recommendedName>
        <fullName evidence="6">Probable glucan endo-1,3-beta-glucosidase ARB_02077</fullName>
        <ecNumber evidence="1">3.2.1.39</ecNumber>
    </recommendedName>
    <alternativeName>
        <fullName evidence="6">(1-&gt;3)-beta-glucan endohydrolase ARB_02077</fullName>
        <shortName evidence="6">(1-&gt;3)-beta-glucanase ARB_02077</shortName>
    </alternativeName>
</protein>
<name>E13B_ARTBC</name>
<keyword id="KW-0325">Glycoprotein</keyword>
<keyword id="KW-0326">Glycosidase</keyword>
<keyword id="KW-0378">Hydrolase</keyword>
<keyword id="KW-1185">Reference proteome</keyword>
<keyword id="KW-0964">Secreted</keyword>
<keyword id="KW-0732">Signal</keyword>
<organism>
    <name type="scientific">Arthroderma benhamiae (strain ATCC MYA-4681 / CBS 112371)</name>
    <name type="common">Trichophyton mentagrophytes</name>
    <dbReference type="NCBI Taxonomy" id="663331"/>
    <lineage>
        <taxon>Eukaryota</taxon>
        <taxon>Fungi</taxon>
        <taxon>Dikarya</taxon>
        <taxon>Ascomycota</taxon>
        <taxon>Pezizomycotina</taxon>
        <taxon>Eurotiomycetes</taxon>
        <taxon>Eurotiomycetidae</taxon>
        <taxon>Onygenales</taxon>
        <taxon>Arthrodermataceae</taxon>
        <taxon>Trichophyton</taxon>
    </lineage>
</organism>
<comment type="function">
    <text evidence="1">Probable glucan endo-1,3-beta-glucosidase involved in the hydrolysis of fungal cell wall (By similarity). Classified as a small-oligosaccharide-producing type based its the end products: glucose, laminaribiose or laminaritetraose (By similarity).</text>
</comment>
<comment type="catalytic activity">
    <reaction evidence="1">
        <text>Hydrolysis of (1-&gt;3)-beta-D-glucosidic linkages in (1-&gt;3)-beta-D-glucans.</text>
        <dbReference type="EC" id="3.2.1.39"/>
    </reaction>
</comment>
<comment type="subcellular location">
    <subcellularLocation>
        <location evidence="5">Secreted</location>
    </subcellularLocation>
</comment>
<comment type="similarity">
    <text evidence="6">Belongs to the glycosyl hydrolase 55 family.</text>
</comment>
<reference key="1">
    <citation type="journal article" date="2011" name="Genome Biol.">
        <title>Comparative and functional genomics provide insights into the pathogenicity of dermatophytic fungi.</title>
        <authorList>
            <person name="Burmester A."/>
            <person name="Shelest E."/>
            <person name="Gloeckner G."/>
            <person name="Heddergott C."/>
            <person name="Schindler S."/>
            <person name="Staib P."/>
            <person name="Heidel A."/>
            <person name="Felder M."/>
            <person name="Petzold A."/>
            <person name="Szafranski K."/>
            <person name="Feuermann M."/>
            <person name="Pedruzzi I."/>
            <person name="Priebe S."/>
            <person name="Groth M."/>
            <person name="Winkler R."/>
            <person name="Li W."/>
            <person name="Kniemeyer O."/>
            <person name="Schroeckh V."/>
            <person name="Hertweck C."/>
            <person name="Hube B."/>
            <person name="White T.C."/>
            <person name="Platzer M."/>
            <person name="Guthke R."/>
            <person name="Heitman J."/>
            <person name="Woestemeyer J."/>
            <person name="Zipfel P.F."/>
            <person name="Monod M."/>
            <person name="Brakhage A.A."/>
        </authorList>
    </citation>
    <scope>NUCLEOTIDE SEQUENCE [LARGE SCALE GENOMIC DNA]</scope>
    <source>
        <strain>ATCC MYA-4681 / CBS 112371</strain>
    </source>
</reference>
<reference key="2">
    <citation type="journal article" date="2011" name="Proteomics">
        <title>Identification of novel secreted proteases during extracellular proteolysis by dermatophytes at acidic pH.</title>
        <authorList>
            <person name="Sriranganadane D."/>
            <person name="Waridel P."/>
            <person name="Salamin K."/>
            <person name="Feuermann M."/>
            <person name="Mignon B."/>
            <person name="Staib P."/>
            <person name="Neuhaus J.M."/>
            <person name="Quadroni M."/>
            <person name="Monod M."/>
        </authorList>
    </citation>
    <scope>IDENTIFICATION BY MASS SPECTROMETRY</scope>
    <scope>SUBCELLULAR LOCATION</scope>
</reference>
<gene>
    <name type="ORF">ARB_02077</name>
</gene>
<sequence length="878" mass="93842">MARGLVSSLLLGQLLLVLVGLFSPAGAVPTPQYQTPNTQASSYWLSSIKRQGIAPFNGGGAGYKVFRNVKDFGAKGDGSSDDTAAINMAISSGSRCGKGCDSSTTTPALVYFPPGTYVVSKPIIQYYYTQIVGDALNMPVIKAAPSFEGIAVIDSDPYENDGSNWYTNQNNFFRGIRNLVIDLTGLDKSKGACIHWQVAQASSLQNIRFEMVKGGGDANKQIGIFMDNGSGGFMTDLVFNGGNYGAFFGNQQFTTRNLTFNNCNTAIFMNWNWAWTFKSLSVNDCGVALNMSNGGFNQTVGSVMILDSKIKNTPKGVVTSFNAESVPESGGTLILDNVDFTGSTDAVTSLQGSSIVGGGSVIKHWVQGNAWTAGSGSKAKRLPPQVQAKPDVARRDDCPAPAPQPPAQSTAPPYPIPETGEPTRVPTTEPSNVPTRVPTGGVPSGTTGTAPSTPSPSPTGGPTACPSAPVTKARVQTALPQPSKPAILLDKSGKVFERAKPQYENVSADKFLSVKSAGAKGDGKTDDTKAIQAVLDKATADQIVYFDHGAYLITSTIKVPKNIKITGEIWPMLMATGKAFSDMKNPIPMLQVGQPGDKGNVELSELIVTTQGSAPGCILVEWNVAEETQGSVGMWDVHFRVGGFAGTQLQSNTCAKTPNTTTTPDPKCFGAFMLLHITKTASAYLENTWLWVSDHELDLADHGQINIYNGRGALIESSGAVWMYGTASEHNTLYNYQIQNAKNVYMALIQTETPYYQSNPDALVPFAPDTKYNDPTFGDCTTAACKKAWGLRILNSTDVFLFGGGLYSFFENYKQECLKTESCQLNMIEVLCSETYLYGVSTKASTNMITSGGKGLVPQKENRSNFCSTIALFHQGNL</sequence>
<proteinExistence type="evidence at protein level"/>
<feature type="signal peptide" evidence="2">
    <location>
        <begin position="1"/>
        <end position="27"/>
    </location>
</feature>
<feature type="chain" id="PRO_5003054147" description="Probable glucan endo-1,3-beta-glucosidase ARB_02077">
    <location>
        <begin position="28"/>
        <end position="878"/>
    </location>
</feature>
<feature type="region of interest" description="Disordered" evidence="4">
    <location>
        <begin position="373"/>
        <end position="472"/>
    </location>
</feature>
<feature type="compositionally biased region" description="Pro residues" evidence="4">
    <location>
        <begin position="400"/>
        <end position="416"/>
    </location>
</feature>
<feature type="compositionally biased region" description="Low complexity" evidence="4">
    <location>
        <begin position="433"/>
        <end position="452"/>
    </location>
</feature>
<feature type="glycosylation site" description="N-linked (GlcNAc...) asparagine" evidence="3">
    <location>
        <position position="228"/>
    </location>
</feature>
<feature type="glycosylation site" description="N-linked (GlcNAc...) asparagine" evidence="3">
    <location>
        <position position="257"/>
    </location>
</feature>
<feature type="glycosylation site" description="N-linked (GlcNAc...) asparagine" evidence="3">
    <location>
        <position position="290"/>
    </location>
</feature>
<feature type="glycosylation site" description="N-linked (GlcNAc...) asparagine" evidence="3">
    <location>
        <position position="297"/>
    </location>
</feature>
<feature type="glycosylation site" description="N-linked (GlcNAc...) asparagine" evidence="3">
    <location>
        <position position="505"/>
    </location>
</feature>
<feature type="glycosylation site" description="N-linked (GlcNAc...) asparagine" evidence="3">
    <location>
        <position position="659"/>
    </location>
</feature>
<feature type="glycosylation site" description="N-linked (GlcNAc...) asparagine" evidence="3">
    <location>
        <position position="795"/>
    </location>
</feature>
<feature type="glycosylation site" description="N-linked (GlcNAc...) asparagine" evidence="3">
    <location>
        <position position="862"/>
    </location>
</feature>
<dbReference type="EC" id="3.2.1.39" evidence="1"/>
<dbReference type="EMBL" id="ABSU01000025">
    <property type="protein sequence ID" value="EFE30886.1"/>
    <property type="molecule type" value="Genomic_DNA"/>
</dbReference>
<dbReference type="RefSeq" id="XP_003011526.1">
    <property type="nucleotide sequence ID" value="XM_003011480.1"/>
</dbReference>
<dbReference type="SMR" id="D4B0V1"/>
<dbReference type="STRING" id="663331.D4B0V1"/>
<dbReference type="GeneID" id="9523294"/>
<dbReference type="KEGG" id="abe:ARB_02077"/>
<dbReference type="eggNOG" id="ENOG502QV54">
    <property type="taxonomic scope" value="Eukaryota"/>
</dbReference>
<dbReference type="HOGENOM" id="CLU_002540_2_1_1"/>
<dbReference type="OMA" id="AVFMNWN"/>
<dbReference type="OrthoDB" id="1046782at2759"/>
<dbReference type="Proteomes" id="UP000008866">
    <property type="component" value="Unassembled WGS sequence"/>
</dbReference>
<dbReference type="GO" id="GO:0005576">
    <property type="term" value="C:extracellular region"/>
    <property type="evidence" value="ECO:0007669"/>
    <property type="project" value="UniProtKB-SubCell"/>
</dbReference>
<dbReference type="GO" id="GO:0042973">
    <property type="term" value="F:glucan endo-1,3-beta-D-glucosidase activity"/>
    <property type="evidence" value="ECO:0007669"/>
    <property type="project" value="UniProtKB-EC"/>
</dbReference>
<dbReference type="GO" id="GO:0004650">
    <property type="term" value="F:polygalacturonase activity"/>
    <property type="evidence" value="ECO:0007669"/>
    <property type="project" value="InterPro"/>
</dbReference>
<dbReference type="CDD" id="cd23668">
    <property type="entry name" value="GH55_beta13glucanase-like"/>
    <property type="match status" value="1"/>
</dbReference>
<dbReference type="FunFam" id="2.160.20.10:FF:000023">
    <property type="entry name" value="Exo-beta-1,3-glucanase Exg0"/>
    <property type="match status" value="1"/>
</dbReference>
<dbReference type="FunFam" id="2.160.20.10:FF:000026">
    <property type="entry name" value="Exo-beta-1,3-glucanase Exg0"/>
    <property type="match status" value="1"/>
</dbReference>
<dbReference type="Gene3D" id="2.160.20.10">
    <property type="entry name" value="Single-stranded right-handed beta-helix, Pectin lyase-like"/>
    <property type="match status" value="2"/>
</dbReference>
<dbReference type="InterPro" id="IPR012334">
    <property type="entry name" value="Pectin_lyas_fold"/>
</dbReference>
<dbReference type="InterPro" id="IPR011050">
    <property type="entry name" value="Pectin_lyase_fold/virulence"/>
</dbReference>
<dbReference type="InterPro" id="IPR039279">
    <property type="entry name" value="QRT3-like"/>
</dbReference>
<dbReference type="InterPro" id="IPR024535">
    <property type="entry name" value="RHGA/B-epi-like_pectate_lyase"/>
</dbReference>
<dbReference type="PANTHER" id="PTHR33928:SF2">
    <property type="entry name" value="PECTATE LYASE SUPERFAMILY PROTEIN DOMAIN-CONTAINING PROTEIN-RELATED"/>
    <property type="match status" value="1"/>
</dbReference>
<dbReference type="PANTHER" id="PTHR33928">
    <property type="entry name" value="POLYGALACTURONASE QRT3"/>
    <property type="match status" value="1"/>
</dbReference>
<dbReference type="Pfam" id="PF12708">
    <property type="entry name" value="Pect-lyase_RHGA_epim"/>
    <property type="match status" value="2"/>
</dbReference>
<dbReference type="SUPFAM" id="SSF51126">
    <property type="entry name" value="Pectin lyase-like"/>
    <property type="match status" value="2"/>
</dbReference>
<accession>D4B0V1</accession>
<evidence type="ECO:0000250" key="1">
    <source>
        <dbReference type="UniProtKB" id="P53626"/>
    </source>
</evidence>
<evidence type="ECO:0000255" key="2"/>
<evidence type="ECO:0000255" key="3">
    <source>
        <dbReference type="PROSITE-ProRule" id="PRU00498"/>
    </source>
</evidence>
<evidence type="ECO:0000256" key="4">
    <source>
        <dbReference type="SAM" id="MobiDB-lite"/>
    </source>
</evidence>
<evidence type="ECO:0000269" key="5">
    <source>
    </source>
</evidence>
<evidence type="ECO:0000305" key="6"/>